<keyword id="KW-0131">Cell cycle</keyword>
<keyword id="KW-0132">Cell division</keyword>
<keyword id="KW-0133">Cell shape</keyword>
<keyword id="KW-0961">Cell wall biogenesis/degradation</keyword>
<keyword id="KW-0963">Cytoplasm</keyword>
<keyword id="KW-0573">Peptidoglycan synthesis</keyword>
<keyword id="KW-0670">Pyruvate</keyword>
<keyword id="KW-0808">Transferase</keyword>
<accession>Q1CTM2</accession>
<comment type="function">
    <text evidence="1">Cell wall formation. Adds enolpyruvyl to UDP-N-acetylglucosamine.</text>
</comment>
<comment type="catalytic activity">
    <reaction evidence="1">
        <text>phosphoenolpyruvate + UDP-N-acetyl-alpha-D-glucosamine = UDP-N-acetyl-3-O-(1-carboxyvinyl)-alpha-D-glucosamine + phosphate</text>
        <dbReference type="Rhea" id="RHEA:18681"/>
        <dbReference type="ChEBI" id="CHEBI:43474"/>
        <dbReference type="ChEBI" id="CHEBI:57705"/>
        <dbReference type="ChEBI" id="CHEBI:58702"/>
        <dbReference type="ChEBI" id="CHEBI:68483"/>
        <dbReference type="EC" id="2.5.1.7"/>
    </reaction>
</comment>
<comment type="pathway">
    <text evidence="1">Cell wall biogenesis; peptidoglycan biosynthesis.</text>
</comment>
<comment type="subcellular location">
    <subcellularLocation>
        <location evidence="1">Cytoplasm</location>
    </subcellularLocation>
</comment>
<comment type="similarity">
    <text evidence="1">Belongs to the EPSP synthase family. MurA subfamily.</text>
</comment>
<name>MURA_HELPH</name>
<evidence type="ECO:0000255" key="1">
    <source>
        <dbReference type="HAMAP-Rule" id="MF_00111"/>
    </source>
</evidence>
<protein>
    <recommendedName>
        <fullName evidence="1">UDP-N-acetylglucosamine 1-carboxyvinyltransferase</fullName>
        <ecNumber evidence="1">2.5.1.7</ecNumber>
    </recommendedName>
    <alternativeName>
        <fullName evidence="1">Enoylpyruvate transferase</fullName>
    </alternativeName>
    <alternativeName>
        <fullName evidence="1">UDP-N-acetylglucosamine enolpyruvyl transferase</fullName>
        <shortName evidence="1">EPT</shortName>
    </alternativeName>
</protein>
<sequence length="422" mass="45785">MDFLEIVGQVPLKGGVEISGAKNSALPILAATLLSRQEVKIKSLPQVADIKAMALLLQNLGAELEWLNPHTLQLSTKSLHHTEATYDLVRKMRASILVLGPLLARFKECLVSLPGGCAIGARPVDLHLKAMQQLGAEIKIEQGYIHAKAPKGLKGNDILFDKISVTGTENALMAASLAKGITRIINAAKEPEIAQLCAFLQSGGVEIEGVGSSELKIRGVESDALNLKDIQIIPDRIEAGTYLCVGAITNSQLKINRIIPNHIQAITDKLIEIGFSLDIQENSIEIYPAKKRQAFEITTKEYPGFPTDMQAQFMALATQCLGTSIIEETLFENRFMHASELQRLGANISLKTNVATISGSTELTGSDVMATDLRASSALVLAALVAKGVSRVHRIYHLDRGYERLEDKINALGAKVLRLKEK</sequence>
<dbReference type="EC" id="2.5.1.7" evidence="1"/>
<dbReference type="EMBL" id="CP000241">
    <property type="protein sequence ID" value="ABF84700.1"/>
    <property type="molecule type" value="Genomic_DNA"/>
</dbReference>
<dbReference type="RefSeq" id="WP_000346543.1">
    <property type="nucleotide sequence ID" value="NC_008086.1"/>
</dbReference>
<dbReference type="SMR" id="Q1CTM2"/>
<dbReference type="KEGG" id="hpa:HPAG1_0633"/>
<dbReference type="HOGENOM" id="CLU_027387_0_0_7"/>
<dbReference type="UniPathway" id="UPA00219"/>
<dbReference type="GO" id="GO:0005737">
    <property type="term" value="C:cytoplasm"/>
    <property type="evidence" value="ECO:0007669"/>
    <property type="project" value="UniProtKB-SubCell"/>
</dbReference>
<dbReference type="GO" id="GO:0008760">
    <property type="term" value="F:UDP-N-acetylglucosamine 1-carboxyvinyltransferase activity"/>
    <property type="evidence" value="ECO:0007669"/>
    <property type="project" value="UniProtKB-UniRule"/>
</dbReference>
<dbReference type="GO" id="GO:0051301">
    <property type="term" value="P:cell division"/>
    <property type="evidence" value="ECO:0007669"/>
    <property type="project" value="UniProtKB-KW"/>
</dbReference>
<dbReference type="GO" id="GO:0071555">
    <property type="term" value="P:cell wall organization"/>
    <property type="evidence" value="ECO:0007669"/>
    <property type="project" value="UniProtKB-KW"/>
</dbReference>
<dbReference type="GO" id="GO:0009252">
    <property type="term" value="P:peptidoglycan biosynthetic process"/>
    <property type="evidence" value="ECO:0007669"/>
    <property type="project" value="UniProtKB-UniRule"/>
</dbReference>
<dbReference type="GO" id="GO:0008360">
    <property type="term" value="P:regulation of cell shape"/>
    <property type="evidence" value="ECO:0007669"/>
    <property type="project" value="UniProtKB-KW"/>
</dbReference>
<dbReference type="GO" id="GO:0019277">
    <property type="term" value="P:UDP-N-acetylgalactosamine biosynthetic process"/>
    <property type="evidence" value="ECO:0007669"/>
    <property type="project" value="InterPro"/>
</dbReference>
<dbReference type="CDD" id="cd01555">
    <property type="entry name" value="UdpNAET"/>
    <property type="match status" value="1"/>
</dbReference>
<dbReference type="FunFam" id="3.65.10.10:FF:000001">
    <property type="entry name" value="UDP-N-acetylglucosamine 1-carboxyvinyltransferase"/>
    <property type="match status" value="1"/>
</dbReference>
<dbReference type="Gene3D" id="3.65.10.10">
    <property type="entry name" value="Enolpyruvate transferase domain"/>
    <property type="match status" value="2"/>
</dbReference>
<dbReference type="HAMAP" id="MF_00111">
    <property type="entry name" value="MurA"/>
    <property type="match status" value="1"/>
</dbReference>
<dbReference type="InterPro" id="IPR001986">
    <property type="entry name" value="Enolpyruvate_Tfrase_dom"/>
</dbReference>
<dbReference type="InterPro" id="IPR036968">
    <property type="entry name" value="Enolpyruvate_Tfrase_sf"/>
</dbReference>
<dbReference type="InterPro" id="IPR050068">
    <property type="entry name" value="MurA_subfamily"/>
</dbReference>
<dbReference type="InterPro" id="IPR013792">
    <property type="entry name" value="RNA3'P_cycl/enolpyr_Trfase_a/b"/>
</dbReference>
<dbReference type="InterPro" id="IPR005750">
    <property type="entry name" value="UDP_GlcNAc_COvinyl_MurA"/>
</dbReference>
<dbReference type="NCBIfam" id="TIGR01072">
    <property type="entry name" value="murA"/>
    <property type="match status" value="1"/>
</dbReference>
<dbReference type="NCBIfam" id="NF006873">
    <property type="entry name" value="PRK09369.1"/>
    <property type="match status" value="1"/>
</dbReference>
<dbReference type="PANTHER" id="PTHR43783">
    <property type="entry name" value="UDP-N-ACETYLGLUCOSAMINE 1-CARBOXYVINYLTRANSFERASE"/>
    <property type="match status" value="1"/>
</dbReference>
<dbReference type="PANTHER" id="PTHR43783:SF1">
    <property type="entry name" value="UDP-N-ACETYLGLUCOSAMINE 1-CARBOXYVINYLTRANSFERASE"/>
    <property type="match status" value="1"/>
</dbReference>
<dbReference type="Pfam" id="PF00275">
    <property type="entry name" value="EPSP_synthase"/>
    <property type="match status" value="1"/>
</dbReference>
<dbReference type="SUPFAM" id="SSF55205">
    <property type="entry name" value="EPT/RTPC-like"/>
    <property type="match status" value="1"/>
</dbReference>
<gene>
    <name evidence="1" type="primary">murA</name>
    <name type="ordered locus">HPAG1_0633</name>
</gene>
<feature type="chain" id="PRO_1000023044" description="UDP-N-acetylglucosamine 1-carboxyvinyltransferase">
    <location>
        <begin position="1"/>
        <end position="422"/>
    </location>
</feature>
<feature type="active site" description="Proton donor" evidence="1">
    <location>
        <position position="117"/>
    </location>
</feature>
<feature type="binding site" evidence="1">
    <location>
        <begin position="22"/>
        <end position="23"/>
    </location>
    <ligand>
        <name>phosphoenolpyruvate</name>
        <dbReference type="ChEBI" id="CHEBI:58702"/>
    </ligand>
</feature>
<feature type="binding site" evidence="1">
    <location>
        <position position="93"/>
    </location>
    <ligand>
        <name>UDP-N-acetyl-alpha-D-glucosamine</name>
        <dbReference type="ChEBI" id="CHEBI:57705"/>
    </ligand>
</feature>
<feature type="binding site" evidence="1">
    <location>
        <begin position="122"/>
        <end position="126"/>
    </location>
    <ligand>
        <name>UDP-N-acetyl-alpha-D-glucosamine</name>
        <dbReference type="ChEBI" id="CHEBI:57705"/>
    </ligand>
</feature>
<feature type="binding site" evidence="1">
    <location>
        <position position="308"/>
    </location>
    <ligand>
        <name>UDP-N-acetyl-alpha-D-glucosamine</name>
        <dbReference type="ChEBI" id="CHEBI:57705"/>
    </ligand>
</feature>
<feature type="binding site" evidence="1">
    <location>
        <position position="330"/>
    </location>
    <ligand>
        <name>UDP-N-acetyl-alpha-D-glucosamine</name>
        <dbReference type="ChEBI" id="CHEBI:57705"/>
    </ligand>
</feature>
<feature type="modified residue" description="2-(S-cysteinyl)pyruvic acid O-phosphothioketal" evidence="1">
    <location>
        <position position="117"/>
    </location>
</feature>
<proteinExistence type="inferred from homology"/>
<organism>
    <name type="scientific">Helicobacter pylori (strain HPAG1)</name>
    <dbReference type="NCBI Taxonomy" id="357544"/>
    <lineage>
        <taxon>Bacteria</taxon>
        <taxon>Pseudomonadati</taxon>
        <taxon>Campylobacterota</taxon>
        <taxon>Epsilonproteobacteria</taxon>
        <taxon>Campylobacterales</taxon>
        <taxon>Helicobacteraceae</taxon>
        <taxon>Helicobacter</taxon>
    </lineage>
</organism>
<reference key="1">
    <citation type="journal article" date="2006" name="Proc. Natl. Acad. Sci. U.S.A.">
        <title>The complete genome sequence of a chronic atrophic gastritis Helicobacter pylori strain: evolution during disease progression.</title>
        <authorList>
            <person name="Oh J.D."/>
            <person name="Kling-Baeckhed H."/>
            <person name="Giannakis M."/>
            <person name="Xu J."/>
            <person name="Fulton R.S."/>
            <person name="Fulton L.A."/>
            <person name="Cordum H.S."/>
            <person name="Wang C."/>
            <person name="Elliott G."/>
            <person name="Edwards J."/>
            <person name="Mardis E.R."/>
            <person name="Engstrand L.G."/>
            <person name="Gordon J.I."/>
        </authorList>
    </citation>
    <scope>NUCLEOTIDE SEQUENCE [LARGE SCALE GENOMIC DNA]</scope>
    <source>
        <strain>HPAG1</strain>
    </source>
</reference>